<dbReference type="EC" id="2.4.1.227" evidence="1"/>
<dbReference type="EMBL" id="CP000083">
    <property type="protein sequence ID" value="AAZ27763.1"/>
    <property type="molecule type" value="Genomic_DNA"/>
</dbReference>
<dbReference type="RefSeq" id="WP_011045194.1">
    <property type="nucleotide sequence ID" value="NC_003910.7"/>
</dbReference>
<dbReference type="SMR" id="Q47VQ9"/>
<dbReference type="STRING" id="167879.CPS_4465"/>
<dbReference type="CAZy" id="GT28">
    <property type="family name" value="Glycosyltransferase Family 28"/>
</dbReference>
<dbReference type="KEGG" id="cps:CPS_4465"/>
<dbReference type="HOGENOM" id="CLU_037404_2_0_6"/>
<dbReference type="UniPathway" id="UPA00219"/>
<dbReference type="Proteomes" id="UP000000547">
    <property type="component" value="Chromosome"/>
</dbReference>
<dbReference type="GO" id="GO:0005886">
    <property type="term" value="C:plasma membrane"/>
    <property type="evidence" value="ECO:0007669"/>
    <property type="project" value="UniProtKB-SubCell"/>
</dbReference>
<dbReference type="GO" id="GO:0051991">
    <property type="term" value="F:UDP-N-acetyl-D-glucosamine:N-acetylmuramoyl-L-alanyl-D-glutamyl-meso-2,6-diaminopimelyl-D-alanyl-D-alanine-diphosphoundecaprenol 4-beta-N-acetylglucosaminlytransferase activity"/>
    <property type="evidence" value="ECO:0007669"/>
    <property type="project" value="RHEA"/>
</dbReference>
<dbReference type="GO" id="GO:0050511">
    <property type="term" value="F:undecaprenyldiphospho-muramoylpentapeptide beta-N-acetylglucosaminyltransferase activity"/>
    <property type="evidence" value="ECO:0007669"/>
    <property type="project" value="UniProtKB-UniRule"/>
</dbReference>
<dbReference type="GO" id="GO:0005975">
    <property type="term" value="P:carbohydrate metabolic process"/>
    <property type="evidence" value="ECO:0007669"/>
    <property type="project" value="InterPro"/>
</dbReference>
<dbReference type="GO" id="GO:0051301">
    <property type="term" value="P:cell division"/>
    <property type="evidence" value="ECO:0007669"/>
    <property type="project" value="UniProtKB-KW"/>
</dbReference>
<dbReference type="GO" id="GO:0071555">
    <property type="term" value="P:cell wall organization"/>
    <property type="evidence" value="ECO:0007669"/>
    <property type="project" value="UniProtKB-KW"/>
</dbReference>
<dbReference type="GO" id="GO:0030259">
    <property type="term" value="P:lipid glycosylation"/>
    <property type="evidence" value="ECO:0007669"/>
    <property type="project" value="UniProtKB-UniRule"/>
</dbReference>
<dbReference type="GO" id="GO:0009252">
    <property type="term" value="P:peptidoglycan biosynthetic process"/>
    <property type="evidence" value="ECO:0007669"/>
    <property type="project" value="UniProtKB-UniRule"/>
</dbReference>
<dbReference type="GO" id="GO:0008360">
    <property type="term" value="P:regulation of cell shape"/>
    <property type="evidence" value="ECO:0007669"/>
    <property type="project" value="UniProtKB-KW"/>
</dbReference>
<dbReference type="CDD" id="cd03785">
    <property type="entry name" value="GT28_MurG"/>
    <property type="match status" value="1"/>
</dbReference>
<dbReference type="Gene3D" id="3.40.50.2000">
    <property type="entry name" value="Glycogen Phosphorylase B"/>
    <property type="match status" value="2"/>
</dbReference>
<dbReference type="HAMAP" id="MF_00033">
    <property type="entry name" value="MurG"/>
    <property type="match status" value="1"/>
</dbReference>
<dbReference type="InterPro" id="IPR006009">
    <property type="entry name" value="GlcNAc_MurG"/>
</dbReference>
<dbReference type="InterPro" id="IPR007235">
    <property type="entry name" value="Glyco_trans_28_C"/>
</dbReference>
<dbReference type="InterPro" id="IPR004276">
    <property type="entry name" value="GlycoTrans_28_N"/>
</dbReference>
<dbReference type="NCBIfam" id="TIGR01133">
    <property type="entry name" value="murG"/>
    <property type="match status" value="1"/>
</dbReference>
<dbReference type="PANTHER" id="PTHR21015:SF22">
    <property type="entry name" value="GLYCOSYLTRANSFERASE"/>
    <property type="match status" value="1"/>
</dbReference>
<dbReference type="PANTHER" id="PTHR21015">
    <property type="entry name" value="UDP-N-ACETYLGLUCOSAMINE--N-ACETYLMURAMYL-(PENTAPEPTIDE) PYROPHOSPHORYL-UNDECAPRENOL N-ACETYLGLUCOSAMINE TRANSFERASE 1"/>
    <property type="match status" value="1"/>
</dbReference>
<dbReference type="Pfam" id="PF04101">
    <property type="entry name" value="Glyco_tran_28_C"/>
    <property type="match status" value="1"/>
</dbReference>
<dbReference type="Pfam" id="PF03033">
    <property type="entry name" value="Glyco_transf_28"/>
    <property type="match status" value="1"/>
</dbReference>
<dbReference type="SUPFAM" id="SSF53756">
    <property type="entry name" value="UDP-Glycosyltransferase/glycogen phosphorylase"/>
    <property type="match status" value="1"/>
</dbReference>
<proteinExistence type="inferred from homology"/>
<accession>Q47VQ9</accession>
<protein>
    <recommendedName>
        <fullName evidence="1">UDP-N-acetylglucosamine--N-acetylmuramyl-(pentapeptide) pyrophosphoryl-undecaprenol N-acetylglucosamine transferase</fullName>
        <ecNumber evidence="1">2.4.1.227</ecNumber>
    </recommendedName>
    <alternativeName>
        <fullName evidence="1">Undecaprenyl-PP-MurNAc-pentapeptide-UDPGlcNAc GlcNAc transferase</fullName>
    </alternativeName>
</protein>
<evidence type="ECO:0000255" key="1">
    <source>
        <dbReference type="HAMAP-Rule" id="MF_00033"/>
    </source>
</evidence>
<reference key="1">
    <citation type="journal article" date="2005" name="Proc. Natl. Acad. Sci. U.S.A.">
        <title>The psychrophilic lifestyle as revealed by the genome sequence of Colwellia psychrerythraea 34H through genomic and proteomic analyses.</title>
        <authorList>
            <person name="Methe B.A."/>
            <person name="Nelson K.E."/>
            <person name="Deming J.W."/>
            <person name="Momen B."/>
            <person name="Melamud E."/>
            <person name="Zhang X."/>
            <person name="Moult J."/>
            <person name="Madupu R."/>
            <person name="Nelson W.C."/>
            <person name="Dodson R.J."/>
            <person name="Brinkac L.M."/>
            <person name="Daugherty S.C."/>
            <person name="Durkin A.S."/>
            <person name="DeBoy R.T."/>
            <person name="Kolonay J.F."/>
            <person name="Sullivan S.A."/>
            <person name="Zhou L."/>
            <person name="Davidsen T.M."/>
            <person name="Wu M."/>
            <person name="Huston A.L."/>
            <person name="Lewis M."/>
            <person name="Weaver B."/>
            <person name="Weidman J.F."/>
            <person name="Khouri H."/>
            <person name="Utterback T.R."/>
            <person name="Feldblyum T.V."/>
            <person name="Fraser C.M."/>
        </authorList>
    </citation>
    <scope>NUCLEOTIDE SEQUENCE [LARGE SCALE GENOMIC DNA]</scope>
    <source>
        <strain>34H / ATCC BAA-681</strain>
    </source>
</reference>
<gene>
    <name evidence="1" type="primary">murG</name>
    <name type="ordered locus">CPS_4465</name>
</gene>
<keyword id="KW-0131">Cell cycle</keyword>
<keyword id="KW-0132">Cell division</keyword>
<keyword id="KW-0997">Cell inner membrane</keyword>
<keyword id="KW-1003">Cell membrane</keyword>
<keyword id="KW-0133">Cell shape</keyword>
<keyword id="KW-0961">Cell wall biogenesis/degradation</keyword>
<keyword id="KW-0328">Glycosyltransferase</keyword>
<keyword id="KW-0472">Membrane</keyword>
<keyword id="KW-0573">Peptidoglycan synthesis</keyword>
<keyword id="KW-0808">Transferase</keyword>
<feature type="chain" id="PRO_0000225046" description="UDP-N-acetylglucosamine--N-acetylmuramyl-(pentapeptide) pyrophosphoryl-undecaprenol N-acetylglucosamine transferase">
    <location>
        <begin position="1"/>
        <end position="387"/>
    </location>
</feature>
<feature type="binding site" evidence="1">
    <location>
        <begin position="23"/>
        <end position="25"/>
    </location>
    <ligand>
        <name>UDP-N-acetyl-alpha-D-glucosamine</name>
        <dbReference type="ChEBI" id="CHEBI:57705"/>
    </ligand>
</feature>
<feature type="binding site" evidence="1">
    <location>
        <position position="135"/>
    </location>
    <ligand>
        <name>UDP-N-acetyl-alpha-D-glucosamine</name>
        <dbReference type="ChEBI" id="CHEBI:57705"/>
    </ligand>
</feature>
<feature type="binding site" evidence="1">
    <location>
        <position position="174"/>
    </location>
    <ligand>
        <name>UDP-N-acetyl-alpha-D-glucosamine</name>
        <dbReference type="ChEBI" id="CHEBI:57705"/>
    </ligand>
</feature>
<feature type="binding site" evidence="1">
    <location>
        <position position="203"/>
    </location>
    <ligand>
        <name>UDP-N-acetyl-alpha-D-glucosamine</name>
        <dbReference type="ChEBI" id="CHEBI:57705"/>
    </ligand>
</feature>
<feature type="binding site" evidence="1">
    <location>
        <position position="261"/>
    </location>
    <ligand>
        <name>UDP-N-acetyl-alpha-D-glucosamine</name>
        <dbReference type="ChEBI" id="CHEBI:57705"/>
    </ligand>
</feature>
<feature type="binding site" evidence="1">
    <location>
        <begin position="280"/>
        <end position="285"/>
    </location>
    <ligand>
        <name>UDP-N-acetyl-alpha-D-glucosamine</name>
        <dbReference type="ChEBI" id="CHEBI:57705"/>
    </ligand>
</feature>
<feature type="binding site" evidence="1">
    <location>
        <position position="306"/>
    </location>
    <ligand>
        <name>UDP-N-acetyl-alpha-D-glucosamine</name>
        <dbReference type="ChEBI" id="CHEBI:57705"/>
    </ligand>
</feature>
<organism>
    <name type="scientific">Colwellia psychrerythraea (strain 34H / ATCC BAA-681)</name>
    <name type="common">Vibrio psychroerythus</name>
    <dbReference type="NCBI Taxonomy" id="167879"/>
    <lineage>
        <taxon>Bacteria</taxon>
        <taxon>Pseudomonadati</taxon>
        <taxon>Pseudomonadota</taxon>
        <taxon>Gammaproteobacteria</taxon>
        <taxon>Alteromonadales</taxon>
        <taxon>Colwelliaceae</taxon>
        <taxon>Colwellia</taxon>
    </lineage>
</organism>
<name>MURG_COLP3</name>
<comment type="function">
    <text evidence="1">Cell wall formation. Catalyzes the transfer of a GlcNAc subunit on undecaprenyl-pyrophosphoryl-MurNAc-pentapeptide (lipid intermediate I) to form undecaprenyl-pyrophosphoryl-MurNAc-(pentapeptide)GlcNAc (lipid intermediate II).</text>
</comment>
<comment type="catalytic activity">
    <reaction evidence="1">
        <text>di-trans,octa-cis-undecaprenyl diphospho-N-acetyl-alpha-D-muramoyl-L-alanyl-D-glutamyl-meso-2,6-diaminopimeloyl-D-alanyl-D-alanine + UDP-N-acetyl-alpha-D-glucosamine = di-trans,octa-cis-undecaprenyl diphospho-[N-acetyl-alpha-D-glucosaminyl-(1-&gt;4)]-N-acetyl-alpha-D-muramoyl-L-alanyl-D-glutamyl-meso-2,6-diaminopimeloyl-D-alanyl-D-alanine + UDP + H(+)</text>
        <dbReference type="Rhea" id="RHEA:31227"/>
        <dbReference type="ChEBI" id="CHEBI:15378"/>
        <dbReference type="ChEBI" id="CHEBI:57705"/>
        <dbReference type="ChEBI" id="CHEBI:58223"/>
        <dbReference type="ChEBI" id="CHEBI:61387"/>
        <dbReference type="ChEBI" id="CHEBI:61388"/>
        <dbReference type="EC" id="2.4.1.227"/>
    </reaction>
</comment>
<comment type="pathway">
    <text evidence="1">Cell wall biogenesis; peptidoglycan biosynthesis.</text>
</comment>
<comment type="subcellular location">
    <subcellularLocation>
        <location evidence="1">Cell inner membrane</location>
        <topology evidence="1">Peripheral membrane protein</topology>
        <orientation evidence="1">Cytoplasmic side</orientation>
    </subcellularLocation>
</comment>
<comment type="similarity">
    <text evidence="1">Belongs to the glycosyltransferase 28 family. MurG subfamily.</text>
</comment>
<sequence>MSVNHGQGNKDLAKTLLVMAGGTGGHIFPGIAVADELKAQGWKIHWLGTADRMEAQIVPMHGYDISFINISGLRGKNLLTTLVMPFKLLRSLFQARRVIKTVKPDVVIGMGGYASAPGGLAAWLSKIPLIVHEQNAAAGLSNRLLARIANKVCCAFPNAFVSGIDVEVVGNPLRASIGQQALVSENIDQSHEGSKNILVVGGSLGAQVLNKVMPDSFKDLSESDEKYCIWHQTGDNNQALVTASYKQEYIDTGKVRVTEFITDIAAAYQWADIVICRAGALTVSELAMAATPAIFVPLPHAVDDHQTKNALYLVKRDAAKLLPQAELNNESITSLIIELFDQPQTLADMAKASLSAATSDASQKVAKLCQQLSISNGAKLRNNEEKI</sequence>